<dbReference type="EC" id="3.6.1.15"/>
<dbReference type="EMBL" id="AF063866">
    <property type="protein sequence ID" value="AAC97824.1"/>
    <property type="molecule type" value="Genomic_DNA"/>
</dbReference>
<dbReference type="PIR" id="T28214">
    <property type="entry name" value="T28214"/>
</dbReference>
<dbReference type="RefSeq" id="NP_048124.1">
    <property type="nucleotide sequence ID" value="NC_001993.1"/>
</dbReference>
<dbReference type="SMR" id="Q9YW39"/>
<dbReference type="GeneID" id="1449819"/>
<dbReference type="KEGG" id="vg:1449819"/>
<dbReference type="OrthoDB" id="1247at10239"/>
<dbReference type="Proteomes" id="UP000172353">
    <property type="component" value="Segment"/>
</dbReference>
<dbReference type="GO" id="GO:0044423">
    <property type="term" value="C:virion component"/>
    <property type="evidence" value="ECO:0007669"/>
    <property type="project" value="UniProtKB-KW"/>
</dbReference>
<dbReference type="GO" id="GO:0005524">
    <property type="term" value="F:ATP binding"/>
    <property type="evidence" value="ECO:0007669"/>
    <property type="project" value="UniProtKB-KW"/>
</dbReference>
<dbReference type="GO" id="GO:0003677">
    <property type="term" value="F:DNA binding"/>
    <property type="evidence" value="ECO:0007669"/>
    <property type="project" value="UniProtKB-KW"/>
</dbReference>
<dbReference type="GO" id="GO:0017111">
    <property type="term" value="F:ribonucleoside triphosphate phosphatase activity"/>
    <property type="evidence" value="ECO:0007669"/>
    <property type="project" value="UniProtKB-EC"/>
</dbReference>
<dbReference type="GO" id="GO:0006351">
    <property type="term" value="P:DNA-templated transcription"/>
    <property type="evidence" value="ECO:0007669"/>
    <property type="project" value="InterPro"/>
</dbReference>
<dbReference type="CDD" id="cd18785">
    <property type="entry name" value="SF2_C"/>
    <property type="match status" value="1"/>
</dbReference>
<dbReference type="Gene3D" id="3.40.50.300">
    <property type="entry name" value="P-loop containing nucleotide triphosphate hydrolases"/>
    <property type="match status" value="2"/>
</dbReference>
<dbReference type="InterPro" id="IPR014001">
    <property type="entry name" value="Helicase_ATP-bd"/>
</dbReference>
<dbReference type="InterPro" id="IPR001650">
    <property type="entry name" value="Helicase_C-like"/>
</dbReference>
<dbReference type="InterPro" id="IPR013676">
    <property type="entry name" value="NPHI_C"/>
</dbReference>
<dbReference type="InterPro" id="IPR027417">
    <property type="entry name" value="P-loop_NTPase"/>
</dbReference>
<dbReference type="InterPro" id="IPR000330">
    <property type="entry name" value="SNF2_N"/>
</dbReference>
<dbReference type="PANTHER" id="PTHR10799">
    <property type="entry name" value="SNF2/RAD54 HELICASE FAMILY"/>
    <property type="match status" value="1"/>
</dbReference>
<dbReference type="Pfam" id="PF00271">
    <property type="entry name" value="Helicase_C"/>
    <property type="match status" value="1"/>
</dbReference>
<dbReference type="Pfam" id="PF08469">
    <property type="entry name" value="NPHI_C"/>
    <property type="match status" value="1"/>
</dbReference>
<dbReference type="Pfam" id="PF00176">
    <property type="entry name" value="SNF2-rel_dom"/>
    <property type="match status" value="1"/>
</dbReference>
<dbReference type="SMART" id="SM00487">
    <property type="entry name" value="DEXDc"/>
    <property type="match status" value="1"/>
</dbReference>
<dbReference type="SMART" id="SM00490">
    <property type="entry name" value="HELICc"/>
    <property type="match status" value="1"/>
</dbReference>
<dbReference type="SUPFAM" id="SSF52540">
    <property type="entry name" value="P-loop containing nucleoside triphosphate hydrolases"/>
    <property type="match status" value="2"/>
</dbReference>
<dbReference type="PROSITE" id="PS51192">
    <property type="entry name" value="HELICASE_ATP_BIND_1"/>
    <property type="match status" value="1"/>
</dbReference>
<dbReference type="PROSITE" id="PS51194">
    <property type="entry name" value="HELICASE_CTER"/>
    <property type="match status" value="1"/>
</dbReference>
<gene>
    <name type="primary">NPH1</name>
    <name type="ordered locus">MSV053</name>
</gene>
<keyword id="KW-0067">ATP-binding</keyword>
<keyword id="KW-0238">DNA-binding</keyword>
<keyword id="KW-0378">Hydrolase</keyword>
<keyword id="KW-0547">Nucleotide-binding</keyword>
<keyword id="KW-1185">Reference proteome</keyword>
<keyword id="KW-0804">Transcription</keyword>
<keyword id="KW-0946">Virion</keyword>
<comment type="function">
    <text evidence="1">DNA-dependent ATPase required for providing the needed energy to achieve the termination of early transcripts. Acts in concert with the RAP94 subunit of the virion RNA polymerase and the capping enzyme/VTF to catalyze release of UUUUUNU-containing nascent RNA from the elongation complex. NPH-I must bind ssDNA in order to exhibit ATPase activity (By similarity).</text>
</comment>
<comment type="catalytic activity">
    <reaction>
        <text>a ribonucleoside 5'-triphosphate + H2O = a ribonucleoside 5'-diphosphate + phosphate + H(+)</text>
        <dbReference type="Rhea" id="RHEA:23680"/>
        <dbReference type="ChEBI" id="CHEBI:15377"/>
        <dbReference type="ChEBI" id="CHEBI:15378"/>
        <dbReference type="ChEBI" id="CHEBI:43474"/>
        <dbReference type="ChEBI" id="CHEBI:57930"/>
        <dbReference type="ChEBI" id="CHEBI:61557"/>
        <dbReference type="EC" id="3.6.1.15"/>
    </reaction>
</comment>
<comment type="subunit">
    <text evidence="1">Monomer. Interacts (via C-terminus) with RAP94 (via N-terminus). Interacts with the cap-specific mRNA (nucleoside-2'-O-)-methyltransferase (By similarity).</text>
</comment>
<comment type="subcellular location">
    <subcellularLocation>
        <location evidence="1">Virion</location>
    </subcellularLocation>
    <text evidence="1">Virion core enzyme.</text>
</comment>
<comment type="similarity">
    <text evidence="4">Belongs to the helicase family. NPH I subfamily.</text>
</comment>
<feature type="chain" id="PRO_0000099103" description="Nucleoside triphosphatase I">
    <location>
        <begin position="1"/>
        <end position="647"/>
    </location>
</feature>
<feature type="domain" description="Helicase ATP-binding" evidence="2">
    <location>
        <begin position="48"/>
        <end position="213"/>
    </location>
</feature>
<feature type="domain" description="Helicase C-terminal" evidence="3">
    <location>
        <begin position="377"/>
        <end position="540"/>
    </location>
</feature>
<feature type="region of interest" description="Binding to the cap-specific mRNA (nucleoside-2'-O-)-methyltransferase" evidence="1">
    <location>
        <begin position="466"/>
        <end position="532"/>
    </location>
</feature>
<feature type="short sequence motif" description="DEXH box">
    <location>
        <begin position="150"/>
        <end position="153"/>
    </location>
</feature>
<feature type="binding site" evidence="2">
    <location>
        <begin position="61"/>
        <end position="68"/>
    </location>
    <ligand>
        <name>ATP</name>
        <dbReference type="ChEBI" id="CHEBI:30616"/>
    </ligand>
</feature>
<organism>
    <name type="scientific">Melanoplus sanguinipes entomopoxvirus</name>
    <name type="common">MsEPV</name>
    <dbReference type="NCBI Taxonomy" id="83191"/>
    <lineage>
        <taxon>Viruses</taxon>
        <taxon>Varidnaviria</taxon>
        <taxon>Bamfordvirae</taxon>
        <taxon>Nucleocytoviricota</taxon>
        <taxon>Pokkesviricetes</taxon>
        <taxon>Chitovirales</taxon>
        <taxon>Poxviridae</taxon>
        <taxon>Entomopoxvirinae</taxon>
        <taxon>Deltaentomopoxvirus</taxon>
    </lineage>
</organism>
<sequence>MHSIEHIVARHFNYALEKTKDLPKSINNEITNEIIILKDYQYLVSRIFIGLSELNSLLLFWDTGYGKTLTSVYIMKHLKLVFPQWFFVIFIKKSLYVDPWLNTLSKLGMKGQNIKFVLYDSSSSLKQFNVLYRTIISSINTKNRILIIIDEVHQVISRTIEKSSSTQRNFLSIFNKIVKLANSENNKLLCMSATPITNNVLEFKYLINLLRPKIIEFKEDFIVNNTLKNHEQLKNGLISITSYQKISEADSFTNTSYTEGFASKNIFYHNVTMTPEQSNIFNIADKHDKKSALGGLKTMRRLVSSFAFYDIKIKGSMSQIEYNKMVSEKLNEFKSIIGNFKFSNEFIDIFRNNDSFSNAKSSEIEIFDKIKQYSCKYIEACKIILNSNGKVLLYEPLVSFEGISTLKIYFNIFNISYVEYSSKTESTRDYNIDIFNKYDNLYGNKIKVCIFSAAGSEGISFSSINDIIILDLPWKESDIKQIIGRSIRLNSHEELPIEKRYVNVHFIIASTIDGKSVDKEIFDLIKSKQDKINVLNSFMKVISIEQIHSKYKYAEPVENEYIFNNIRHTKIDDVNENNVITKIIVSPIYYCSEDNLNIIYNGYLDKKTGIIYSNNIPIAKLILDENNIYKFFIKDDKLVYITKSIYE</sequence>
<organismHost>
    <name type="scientific">Melanoplus sanguinipes</name>
    <name type="common">Migratory grasshopper</name>
    <dbReference type="NCBI Taxonomy" id="65742"/>
</organismHost>
<name>NTP1_MSEPV</name>
<protein>
    <recommendedName>
        <fullName>Nucleoside triphosphatase I</fullName>
        <ecNumber>3.6.1.15</ecNumber>
    </recommendedName>
    <alternativeName>
        <fullName>NPH-I</fullName>
    </alternativeName>
    <alternativeName>
        <fullName>Nucleoside triphosphate phosphohydrolase I</fullName>
        <shortName>NPH I</shortName>
    </alternativeName>
</protein>
<proteinExistence type="inferred from homology"/>
<evidence type="ECO:0000250" key="1"/>
<evidence type="ECO:0000255" key="2">
    <source>
        <dbReference type="PROSITE-ProRule" id="PRU00541"/>
    </source>
</evidence>
<evidence type="ECO:0000255" key="3">
    <source>
        <dbReference type="PROSITE-ProRule" id="PRU00542"/>
    </source>
</evidence>
<evidence type="ECO:0000305" key="4"/>
<accession>Q9YW39</accession>
<reference key="1">
    <citation type="journal article" date="1999" name="J. Virol.">
        <title>The genome of Melanoplus sanguinipes entomopoxvirus.</title>
        <authorList>
            <person name="Afonso C.L."/>
            <person name="Tulman E.R."/>
            <person name="Lu Z."/>
            <person name="Oma E."/>
            <person name="Kutish G.F."/>
            <person name="Rock D.L."/>
        </authorList>
    </citation>
    <scope>NUCLEOTIDE SEQUENCE [LARGE SCALE GENOMIC DNA]</scope>
    <source>
        <strain>Isolate Tucson</strain>
    </source>
</reference>